<dbReference type="EC" id="2.7.1.11" evidence="6"/>
<dbReference type="EMBL" id="CR859048">
    <property type="protein sequence ID" value="CAH91241.1"/>
    <property type="molecule type" value="mRNA"/>
</dbReference>
<dbReference type="SMR" id="Q5RAG9"/>
<dbReference type="FunCoup" id="Q5RAG9">
    <property type="interactions" value="1693"/>
</dbReference>
<dbReference type="STRING" id="9601.ENSPPYP00000005084"/>
<dbReference type="GlyCosmos" id="Q5RAG9">
    <property type="glycosylation" value="1 site, No reported glycans"/>
</dbReference>
<dbReference type="eggNOG" id="KOG2440">
    <property type="taxonomic scope" value="Eukaryota"/>
</dbReference>
<dbReference type="InParanoid" id="Q5RAG9"/>
<dbReference type="UniPathway" id="UPA00109">
    <property type="reaction ID" value="UER00182"/>
</dbReference>
<dbReference type="Proteomes" id="UP000001595">
    <property type="component" value="Unplaced"/>
</dbReference>
<dbReference type="GO" id="GO:0005945">
    <property type="term" value="C:6-phosphofructokinase complex"/>
    <property type="evidence" value="ECO:0007669"/>
    <property type="project" value="TreeGrafter"/>
</dbReference>
<dbReference type="GO" id="GO:0016020">
    <property type="term" value="C:membrane"/>
    <property type="evidence" value="ECO:0007669"/>
    <property type="project" value="TreeGrafter"/>
</dbReference>
<dbReference type="GO" id="GO:0003872">
    <property type="term" value="F:6-phosphofructokinase activity"/>
    <property type="evidence" value="ECO:0000250"/>
    <property type="project" value="UniProtKB"/>
</dbReference>
<dbReference type="GO" id="GO:0016208">
    <property type="term" value="F:AMP binding"/>
    <property type="evidence" value="ECO:0007669"/>
    <property type="project" value="TreeGrafter"/>
</dbReference>
<dbReference type="GO" id="GO:0005524">
    <property type="term" value="F:ATP binding"/>
    <property type="evidence" value="ECO:0007669"/>
    <property type="project" value="UniProtKB-KW"/>
</dbReference>
<dbReference type="GO" id="GO:0070095">
    <property type="term" value="F:fructose-6-phosphate binding"/>
    <property type="evidence" value="ECO:0007669"/>
    <property type="project" value="TreeGrafter"/>
</dbReference>
<dbReference type="GO" id="GO:0042802">
    <property type="term" value="F:identical protein binding"/>
    <property type="evidence" value="ECO:0007669"/>
    <property type="project" value="TreeGrafter"/>
</dbReference>
<dbReference type="GO" id="GO:0046872">
    <property type="term" value="F:metal ion binding"/>
    <property type="evidence" value="ECO:0007669"/>
    <property type="project" value="UniProtKB-KW"/>
</dbReference>
<dbReference type="GO" id="GO:0048029">
    <property type="term" value="F:monosaccharide binding"/>
    <property type="evidence" value="ECO:0007669"/>
    <property type="project" value="TreeGrafter"/>
</dbReference>
<dbReference type="GO" id="GO:0061621">
    <property type="term" value="P:canonical glycolysis"/>
    <property type="evidence" value="ECO:0007669"/>
    <property type="project" value="TreeGrafter"/>
</dbReference>
<dbReference type="GO" id="GO:0030388">
    <property type="term" value="P:fructose 1,6-bisphosphate metabolic process"/>
    <property type="evidence" value="ECO:0007669"/>
    <property type="project" value="TreeGrafter"/>
</dbReference>
<dbReference type="GO" id="GO:0006002">
    <property type="term" value="P:fructose 6-phosphate metabolic process"/>
    <property type="evidence" value="ECO:0007669"/>
    <property type="project" value="InterPro"/>
</dbReference>
<dbReference type="CDD" id="cd00764">
    <property type="entry name" value="Eukaryotic_PFK"/>
    <property type="match status" value="1"/>
</dbReference>
<dbReference type="FunFam" id="3.40.50.450:FF:000004">
    <property type="entry name" value="ATP-dependent 6-phosphofructokinase"/>
    <property type="match status" value="1"/>
</dbReference>
<dbReference type="FunFam" id="3.40.50.460:FF:000001">
    <property type="entry name" value="ATP-dependent 6-phosphofructokinase"/>
    <property type="match status" value="1"/>
</dbReference>
<dbReference type="FunFam" id="3.40.50.460:FF:000003">
    <property type="entry name" value="ATP-dependent 6-phosphofructokinase"/>
    <property type="match status" value="1"/>
</dbReference>
<dbReference type="FunFam" id="3.40.50.450:FF:000043">
    <property type="entry name" value="ATP-dependent 6-phosphofructokinase, platelet type"/>
    <property type="match status" value="1"/>
</dbReference>
<dbReference type="Gene3D" id="3.40.50.450">
    <property type="match status" value="2"/>
</dbReference>
<dbReference type="Gene3D" id="3.40.50.460">
    <property type="entry name" value="Phosphofructokinase domain"/>
    <property type="match status" value="2"/>
</dbReference>
<dbReference type="HAMAP" id="MF_03184">
    <property type="entry name" value="Phosphofructokinase_I_E"/>
    <property type="match status" value="1"/>
</dbReference>
<dbReference type="InterPro" id="IPR009161">
    <property type="entry name" value="6-Pfructokinase_euk"/>
</dbReference>
<dbReference type="InterPro" id="IPR022953">
    <property type="entry name" value="ATP_PFK"/>
</dbReference>
<dbReference type="InterPro" id="IPR041914">
    <property type="entry name" value="PFK_vert-type"/>
</dbReference>
<dbReference type="InterPro" id="IPR015912">
    <property type="entry name" value="Phosphofructokinase_CS"/>
</dbReference>
<dbReference type="InterPro" id="IPR000023">
    <property type="entry name" value="Phosphofructokinase_dom"/>
</dbReference>
<dbReference type="InterPro" id="IPR035966">
    <property type="entry name" value="PKF_sf"/>
</dbReference>
<dbReference type="NCBIfam" id="TIGR02478">
    <property type="entry name" value="6PF1K_euk"/>
    <property type="match status" value="1"/>
</dbReference>
<dbReference type="PANTHER" id="PTHR13697:SF59">
    <property type="entry name" value="ATP-DEPENDENT 6-PHOSPHOFRUCTOKINASE, MUSCLE TYPE"/>
    <property type="match status" value="1"/>
</dbReference>
<dbReference type="PANTHER" id="PTHR13697">
    <property type="entry name" value="PHOSPHOFRUCTOKINASE"/>
    <property type="match status" value="1"/>
</dbReference>
<dbReference type="Pfam" id="PF00365">
    <property type="entry name" value="PFK"/>
    <property type="match status" value="2"/>
</dbReference>
<dbReference type="PIRSF" id="PIRSF000533">
    <property type="entry name" value="ATP_PFK_euk"/>
    <property type="match status" value="1"/>
</dbReference>
<dbReference type="PRINTS" id="PR00476">
    <property type="entry name" value="PHFRCTKINASE"/>
</dbReference>
<dbReference type="SUPFAM" id="SSF53784">
    <property type="entry name" value="Phosphofructokinase"/>
    <property type="match status" value="2"/>
</dbReference>
<dbReference type="PROSITE" id="PS00433">
    <property type="entry name" value="PHOSPHOFRUCTOKINASE"/>
    <property type="match status" value="2"/>
</dbReference>
<feature type="initiator methionine" description="Removed" evidence="2">
    <location>
        <position position="1"/>
    </location>
</feature>
<feature type="chain" id="PRO_0000284439" description="ATP-dependent 6-phosphofructokinase, muscle type">
    <location>
        <begin position="2"/>
        <end position="780"/>
    </location>
</feature>
<feature type="region of interest" description="N-terminal catalytic PFK domain 1">
    <location>
        <begin position="2"/>
        <end position="390"/>
    </location>
</feature>
<feature type="region of interest" description="Interdomain linker">
    <location>
        <begin position="391"/>
        <end position="401"/>
    </location>
</feature>
<feature type="region of interest" description="C-terminal regulatory PFK domain 2">
    <location>
        <begin position="402"/>
        <end position="780"/>
    </location>
</feature>
<feature type="active site" description="Proton acceptor" evidence="6">
    <location>
        <position position="166"/>
    </location>
</feature>
<feature type="binding site" evidence="6">
    <location>
        <position position="25"/>
    </location>
    <ligand>
        <name>ATP</name>
        <dbReference type="ChEBI" id="CHEBI:30616"/>
    </ligand>
</feature>
<feature type="binding site" evidence="6">
    <location>
        <begin position="88"/>
        <end position="89"/>
    </location>
    <ligand>
        <name>ATP</name>
        <dbReference type="ChEBI" id="CHEBI:30616"/>
    </ligand>
</feature>
<feature type="binding site" evidence="6">
    <location>
        <begin position="118"/>
        <end position="121"/>
    </location>
    <ligand>
        <name>ATP</name>
        <dbReference type="ChEBI" id="CHEBI:30616"/>
    </ligand>
</feature>
<feature type="binding site" evidence="6">
    <location>
        <position position="119"/>
    </location>
    <ligand>
        <name>Mg(2+)</name>
        <dbReference type="ChEBI" id="CHEBI:18420"/>
        <note>catalytic</note>
    </ligand>
</feature>
<feature type="binding site" description="in other chain" evidence="6">
    <location>
        <begin position="164"/>
        <end position="166"/>
    </location>
    <ligand>
        <name>substrate</name>
        <note>ligand shared between dimeric partners</note>
    </ligand>
</feature>
<feature type="binding site" evidence="6">
    <location>
        <position position="201"/>
    </location>
    <ligand>
        <name>substrate</name>
        <note>ligand shared between dimeric partners</note>
    </ligand>
</feature>
<feature type="binding site" description="in other chain" evidence="6">
    <location>
        <begin position="208"/>
        <end position="210"/>
    </location>
    <ligand>
        <name>substrate</name>
        <note>ligand shared between dimeric partners</note>
    </ligand>
</feature>
<feature type="binding site" description="in other chain" evidence="6">
    <location>
        <position position="264"/>
    </location>
    <ligand>
        <name>substrate</name>
        <note>ligand shared between dimeric partners</note>
    </ligand>
</feature>
<feature type="binding site" evidence="6">
    <location>
        <position position="292"/>
    </location>
    <ligand>
        <name>substrate</name>
        <note>ligand shared between dimeric partners</note>
    </ligand>
</feature>
<feature type="binding site" description="in other chain" evidence="6">
    <location>
        <begin position="298"/>
        <end position="301"/>
    </location>
    <ligand>
        <name>substrate</name>
        <note>ligand shared between dimeric partners</note>
    </ligand>
</feature>
<feature type="binding site" description="in other chain" evidence="6">
    <location>
        <position position="471"/>
    </location>
    <ligand>
        <name>beta-D-fructose 2,6-bisphosphate</name>
        <dbReference type="ChEBI" id="CHEBI:58579"/>
        <note>allosteric activator; ligand shared between dimeric partners</note>
    </ligand>
</feature>
<feature type="binding site" description="in other chain" evidence="6">
    <location>
        <begin position="528"/>
        <end position="532"/>
    </location>
    <ligand>
        <name>beta-D-fructose 2,6-bisphosphate</name>
        <dbReference type="ChEBI" id="CHEBI:58579"/>
        <note>allosteric activator; ligand shared between dimeric partners</note>
    </ligand>
</feature>
<feature type="binding site" evidence="6">
    <location>
        <position position="566"/>
    </location>
    <ligand>
        <name>beta-D-fructose 2,6-bisphosphate</name>
        <dbReference type="ChEBI" id="CHEBI:58579"/>
        <note>allosteric activator; ligand shared between dimeric partners</note>
    </ligand>
</feature>
<feature type="binding site" description="in other chain" evidence="6">
    <location>
        <begin position="573"/>
        <end position="575"/>
    </location>
    <ligand>
        <name>beta-D-fructose 2,6-bisphosphate</name>
        <dbReference type="ChEBI" id="CHEBI:58579"/>
        <note>allosteric activator; ligand shared between dimeric partners</note>
    </ligand>
</feature>
<feature type="binding site" description="in other chain" evidence="6">
    <location>
        <position position="629"/>
    </location>
    <ligand>
        <name>beta-D-fructose 2,6-bisphosphate</name>
        <dbReference type="ChEBI" id="CHEBI:58579"/>
        <note>allosteric activator; ligand shared between dimeric partners</note>
    </ligand>
</feature>
<feature type="binding site" evidence="6">
    <location>
        <position position="655"/>
    </location>
    <ligand>
        <name>beta-D-fructose 2,6-bisphosphate</name>
        <dbReference type="ChEBI" id="CHEBI:58579"/>
        <note>allosteric activator; ligand shared between dimeric partners</note>
    </ligand>
</feature>
<feature type="binding site" description="in other chain" evidence="6">
    <location>
        <begin position="661"/>
        <end position="664"/>
    </location>
    <ligand>
        <name>beta-D-fructose 2,6-bisphosphate</name>
        <dbReference type="ChEBI" id="CHEBI:58579"/>
        <note>allosteric activator; ligand shared between dimeric partners</note>
    </ligand>
</feature>
<feature type="binding site" description="in other chain" evidence="6">
    <location>
        <position position="735"/>
    </location>
    <ligand>
        <name>beta-D-fructose 2,6-bisphosphate</name>
        <dbReference type="ChEBI" id="CHEBI:58579"/>
        <note>allosteric activator; ligand shared between dimeric partners</note>
    </ligand>
</feature>
<feature type="modified residue" description="N-acetylthreonine" evidence="2">
    <location>
        <position position="2"/>
    </location>
</feature>
<feature type="modified residue" description="Phosphoserine" evidence="5">
    <location>
        <position position="133"/>
    </location>
</feature>
<feature type="modified residue" description="Phosphoserine" evidence="4">
    <location>
        <position position="377"/>
    </location>
</feature>
<feature type="modified residue" description="N6-(2-hydroxyisobutyryl)lysine" evidence="3">
    <location>
        <position position="557"/>
    </location>
</feature>
<feature type="modified residue" description="Phosphoserine" evidence="3">
    <location>
        <position position="667"/>
    </location>
</feature>
<feature type="modified residue" description="Phosphoserine" evidence="2">
    <location>
        <position position="775"/>
    </location>
</feature>
<feature type="glycosylation site" description="O-linked (GlcNAc) serine" evidence="1">
    <location>
        <position position="530"/>
    </location>
</feature>
<keyword id="KW-0007">Acetylation</keyword>
<keyword id="KW-0021">Allosteric enzyme</keyword>
<keyword id="KW-0067">ATP-binding</keyword>
<keyword id="KW-0963">Cytoplasm</keyword>
<keyword id="KW-0324">Glycolysis</keyword>
<keyword id="KW-0325">Glycoprotein</keyword>
<keyword id="KW-0379">Hydroxylation</keyword>
<keyword id="KW-0418">Kinase</keyword>
<keyword id="KW-0460">Magnesium</keyword>
<keyword id="KW-0479">Metal-binding</keyword>
<keyword id="KW-0547">Nucleotide-binding</keyword>
<keyword id="KW-0597">Phosphoprotein</keyword>
<keyword id="KW-1185">Reference proteome</keyword>
<keyword id="KW-0808">Transferase</keyword>
<comment type="function">
    <text evidence="6">Catalyzes the phosphorylation of D-fructose 6-phosphate to fructose 1,6-bisphosphate by ATP, the first committing step of glycolysis.</text>
</comment>
<comment type="catalytic activity">
    <reaction evidence="6">
        <text>beta-D-fructose 6-phosphate + ATP = beta-D-fructose 1,6-bisphosphate + ADP + H(+)</text>
        <dbReference type="Rhea" id="RHEA:16109"/>
        <dbReference type="ChEBI" id="CHEBI:15378"/>
        <dbReference type="ChEBI" id="CHEBI:30616"/>
        <dbReference type="ChEBI" id="CHEBI:32966"/>
        <dbReference type="ChEBI" id="CHEBI:57634"/>
        <dbReference type="ChEBI" id="CHEBI:456216"/>
        <dbReference type="EC" id="2.7.1.11"/>
    </reaction>
</comment>
<comment type="cofactor">
    <cofactor evidence="6">
        <name>Mg(2+)</name>
        <dbReference type="ChEBI" id="CHEBI:18420"/>
    </cofactor>
</comment>
<comment type="activity regulation">
    <text evidence="6">Allosterically activated by ADP, AMP, or fructose 2,6-bisphosphate, and allosterically inhibited by ATP or citrate.</text>
</comment>
<comment type="pathway">
    <text evidence="6">Carbohydrate degradation; glycolysis; D-glyceraldehyde 3-phosphate and glycerone phosphate from D-glucose: step 3/4.</text>
</comment>
<comment type="subunit">
    <text evidence="4 6 7">Homo- and heterotetramers (By similarity). Phosphofructokinase (PFK) enzyme functions as a tetramer composed of different combinations of 3 types of subunits, called PFKM (M), PFKL (L) and PFKP (P). The composition of the PFK tetramer differs according to the tissue type it is present in. The kinetic and regulatory properties of the tetrameric enzyme are dependent on the subunit composition, hence can vary across tissues (Probable). Interacts (via C-terminus) with HK1 (via N-terminal spermatogenic cell-specific region) (By similarity).</text>
</comment>
<comment type="subcellular location">
    <subcellularLocation>
        <location evidence="6">Cytoplasm</location>
    </subcellularLocation>
</comment>
<comment type="PTM">
    <text evidence="1">GlcNAcylation decreases enzyme activity.</text>
</comment>
<comment type="similarity">
    <text evidence="6">Belongs to the phosphofructokinase type A (PFKA) family. ATP-dependent PFK group I subfamily. Eukaryotic two domain clade 'E' sub-subfamily.</text>
</comment>
<accession>Q5RAG9</accession>
<protein>
    <recommendedName>
        <fullName evidence="6">ATP-dependent 6-phosphofructokinase, muscle type</fullName>
        <shortName evidence="6">ATP-PFK</shortName>
        <shortName>PFK-M</shortName>
        <ecNumber evidence="6">2.7.1.11</ecNumber>
    </recommendedName>
    <alternativeName>
        <fullName>6-phosphofructokinase type A</fullName>
    </alternativeName>
    <alternativeName>
        <fullName>Phosphofructo-1-kinase isozyme A</fullName>
        <shortName>PFK-A</shortName>
    </alternativeName>
    <alternativeName>
        <fullName evidence="6">Phosphohexokinase</fullName>
    </alternativeName>
</protein>
<reference key="1">
    <citation type="submission" date="2004-11" db="EMBL/GenBank/DDBJ databases">
        <authorList>
            <consortium name="The German cDNA consortium"/>
        </authorList>
    </citation>
    <scope>NUCLEOTIDE SEQUENCE [LARGE SCALE MRNA]</scope>
    <source>
        <tissue>Heart</tissue>
    </source>
</reference>
<evidence type="ECO:0000250" key="1"/>
<evidence type="ECO:0000250" key="2">
    <source>
        <dbReference type="UniProtKB" id="P00511"/>
    </source>
</evidence>
<evidence type="ECO:0000250" key="3">
    <source>
        <dbReference type="UniProtKB" id="P08237"/>
    </source>
</evidence>
<evidence type="ECO:0000250" key="4">
    <source>
        <dbReference type="UniProtKB" id="P47857"/>
    </source>
</evidence>
<evidence type="ECO:0000250" key="5">
    <source>
        <dbReference type="UniProtKB" id="P47858"/>
    </source>
</evidence>
<evidence type="ECO:0000255" key="6">
    <source>
        <dbReference type="HAMAP-Rule" id="MF_03184"/>
    </source>
</evidence>
<evidence type="ECO:0000305" key="7"/>
<organism>
    <name type="scientific">Pongo abelii</name>
    <name type="common">Sumatran orangutan</name>
    <name type="synonym">Pongo pygmaeus abelii</name>
    <dbReference type="NCBI Taxonomy" id="9601"/>
    <lineage>
        <taxon>Eukaryota</taxon>
        <taxon>Metazoa</taxon>
        <taxon>Chordata</taxon>
        <taxon>Craniata</taxon>
        <taxon>Vertebrata</taxon>
        <taxon>Euteleostomi</taxon>
        <taxon>Mammalia</taxon>
        <taxon>Eutheria</taxon>
        <taxon>Euarchontoglires</taxon>
        <taxon>Primates</taxon>
        <taxon>Haplorrhini</taxon>
        <taxon>Catarrhini</taxon>
        <taxon>Hominidae</taxon>
        <taxon>Pongo</taxon>
    </lineage>
</organism>
<gene>
    <name type="primary">PFKM</name>
</gene>
<sequence>MTHEEHHATKTLGIGKAIAVLTSGGDAQGMNAAVRAVVRVGIFTGARVFFVHEGYQGLVDGGDHIKEATWESVSMMLQLGGTVIGSARCKDFREREGRLRAAYNLVKRGITNLCVIGGDGSLTGADTFRSEWSDLLSDLQKAGKITDEEATKSSYLNIVGLVGSIDNDFCGTDMTIGTDSALHRIIEIVDAITTTAQSHQRTIVLEVMGRHCGYLALVTSLSCGADWVFIPECPPDDDWEEHLCRRLSETRTRGSRLNIIIVAEGAIDKNGKPITSEDIKNLVVKRLGYDTRVTVLGHVQRGGTPSAFDRILGSRMGVEAVMALLEGTPDTPACVVSLSGNQAVRLPLMECVQVTKDVTKAMDEKKFDEALKLRGRSFMNNWEVYKLLAHVRPPVSKSGSHTVAVMNVGAPAAGMNAAVRSTVRIGLIQGNRVLVVHDGFEGLAKGQIEEAGWSYVGGWTGQGGSKLGTKRTLPKKSFEQISANITKFNIQGLVIIGGFEAYTGGLELMEGRKQFDELCIPFVVIPATVSNNVPGSDFSVGADTALNTICTTCDRIKQSAAGTKRRVFIIETMGGYCGHLATMAGLAAGADAAYIFGEPFTIRDLQANVEHLVQKMKTTVKRGLVLRNEKCNENYTTDFIFNLYSEEGKGIFDSRKNVLGHMQQGGSPTPFDRNFATKMGAKAMNWMSGKIKESYRNGRIFANTPDSGCVLGMRKRALVFQPVAELKDQTDFEHRIPKEQWWLKLRPILKILAKYEIDLDTSDHAHLEHITRKRSGEAAV</sequence>
<proteinExistence type="evidence at transcript level"/>
<name>PFKAM_PONAB</name>